<feature type="chain" id="PRO_0000372731" description="UPF0741 protein BCG9842_B5444">
    <location>
        <begin position="1"/>
        <end position="74"/>
    </location>
</feature>
<reference key="1">
    <citation type="submission" date="2008-10" db="EMBL/GenBank/DDBJ databases">
        <title>Genome sequence of Bacillus cereus G9842.</title>
        <authorList>
            <person name="Dodson R.J."/>
            <person name="Durkin A.S."/>
            <person name="Rosovitz M.J."/>
            <person name="Rasko D.A."/>
            <person name="Hoffmaster A."/>
            <person name="Ravel J."/>
            <person name="Sutton G."/>
        </authorList>
    </citation>
    <scope>NUCLEOTIDE SEQUENCE [LARGE SCALE GENOMIC DNA]</scope>
    <source>
        <strain>G9842</strain>
    </source>
</reference>
<comment type="similarity">
    <text evidence="1">Belongs to the UPF0741 family.</text>
</comment>
<protein>
    <recommendedName>
        <fullName evidence="1">UPF0741 protein BCG9842_B5444</fullName>
    </recommendedName>
</protein>
<evidence type="ECO:0000255" key="1">
    <source>
        <dbReference type="HAMAP-Rule" id="MF_01863"/>
    </source>
</evidence>
<organism>
    <name type="scientific">Bacillus cereus (strain G9842)</name>
    <dbReference type="NCBI Taxonomy" id="405531"/>
    <lineage>
        <taxon>Bacteria</taxon>
        <taxon>Bacillati</taxon>
        <taxon>Bacillota</taxon>
        <taxon>Bacilli</taxon>
        <taxon>Bacillales</taxon>
        <taxon>Bacillaceae</taxon>
        <taxon>Bacillus</taxon>
        <taxon>Bacillus cereus group</taxon>
    </lineage>
</organism>
<name>Y5444_BACC2</name>
<proteinExistence type="inferred from homology"/>
<sequence>MGNEFRVCDDCQATNVKTLVPKLKKVDSCATIEVGCQSYCGPGRKKSFAFVNNRPVAAPTEDELIVKIEAKLNK</sequence>
<accession>B7IRR4</accession>
<gene>
    <name type="ordered locus">BCG9842_B5444</name>
</gene>
<dbReference type="EMBL" id="CP001186">
    <property type="protein sequence ID" value="ACK97077.1"/>
    <property type="molecule type" value="Genomic_DNA"/>
</dbReference>
<dbReference type="RefSeq" id="WP_000526079.1">
    <property type="nucleotide sequence ID" value="NC_011772.1"/>
</dbReference>
<dbReference type="SMR" id="B7IRR4"/>
<dbReference type="KEGG" id="bcg:BCG9842_B5444"/>
<dbReference type="HOGENOM" id="CLU_163820_1_0_9"/>
<dbReference type="Proteomes" id="UP000006744">
    <property type="component" value="Chromosome"/>
</dbReference>
<dbReference type="HAMAP" id="MF_01863">
    <property type="entry name" value="UPF0741"/>
    <property type="match status" value="1"/>
</dbReference>
<dbReference type="InterPro" id="IPR009910">
    <property type="entry name" value="DUF1450"/>
</dbReference>
<dbReference type="InterPro" id="IPR020880">
    <property type="entry name" value="UPF0741"/>
</dbReference>
<dbReference type="Pfam" id="PF07293">
    <property type="entry name" value="DUF1450"/>
    <property type="match status" value="1"/>
</dbReference>